<protein>
    <recommendedName>
        <fullName evidence="1">Thiazole synthase</fullName>
        <ecNumber evidence="1">2.8.1.10</ecNumber>
    </recommendedName>
</protein>
<gene>
    <name evidence="1" type="primary">thiG</name>
    <name type="ordered locus">VC_0065</name>
</gene>
<evidence type="ECO:0000255" key="1">
    <source>
        <dbReference type="HAMAP-Rule" id="MF_00443"/>
    </source>
</evidence>
<comment type="function">
    <text evidence="1">Catalyzes the rearrangement of 1-deoxy-D-xylulose 5-phosphate (DXP) to produce the thiazole phosphate moiety of thiamine. Sulfur is provided by the thiocarboxylate moiety of the carrier protein ThiS. In vitro, sulfur can be provided by H(2)S.</text>
</comment>
<comment type="catalytic activity">
    <reaction evidence="1">
        <text>[ThiS sulfur-carrier protein]-C-terminal-Gly-aminoethanethioate + 2-iminoacetate + 1-deoxy-D-xylulose 5-phosphate = [ThiS sulfur-carrier protein]-C-terminal Gly-Gly + 2-[(2R,5Z)-2-carboxy-4-methylthiazol-5(2H)-ylidene]ethyl phosphate + 2 H2O + H(+)</text>
        <dbReference type="Rhea" id="RHEA:26297"/>
        <dbReference type="Rhea" id="RHEA-COMP:12909"/>
        <dbReference type="Rhea" id="RHEA-COMP:19908"/>
        <dbReference type="ChEBI" id="CHEBI:15377"/>
        <dbReference type="ChEBI" id="CHEBI:15378"/>
        <dbReference type="ChEBI" id="CHEBI:57792"/>
        <dbReference type="ChEBI" id="CHEBI:62899"/>
        <dbReference type="ChEBI" id="CHEBI:77846"/>
        <dbReference type="ChEBI" id="CHEBI:90778"/>
        <dbReference type="ChEBI" id="CHEBI:232372"/>
        <dbReference type="EC" id="2.8.1.10"/>
    </reaction>
</comment>
<comment type="pathway">
    <text evidence="1">Cofactor biosynthesis; thiamine diphosphate biosynthesis.</text>
</comment>
<comment type="subunit">
    <text evidence="1">Homotetramer. Forms heterodimers with either ThiH or ThiS.</text>
</comment>
<comment type="subcellular location">
    <subcellularLocation>
        <location evidence="1">Cytoplasm</location>
    </subcellularLocation>
</comment>
<comment type="similarity">
    <text evidence="1">Belongs to the ThiG family.</text>
</comment>
<dbReference type="EC" id="2.8.1.10" evidence="1"/>
<dbReference type="EMBL" id="AE003852">
    <property type="protein sequence ID" value="AAF93243.1"/>
    <property type="molecule type" value="Genomic_DNA"/>
</dbReference>
<dbReference type="PIR" id="D82369">
    <property type="entry name" value="D82369"/>
</dbReference>
<dbReference type="RefSeq" id="NP_229724.1">
    <property type="nucleotide sequence ID" value="NC_002505.1"/>
</dbReference>
<dbReference type="RefSeq" id="WP_000912209.1">
    <property type="nucleotide sequence ID" value="NZ_LT906614.1"/>
</dbReference>
<dbReference type="SMR" id="Q9KVS4"/>
<dbReference type="STRING" id="243277.VC_0065"/>
<dbReference type="DNASU" id="2612943"/>
<dbReference type="EnsemblBacteria" id="AAF93243">
    <property type="protein sequence ID" value="AAF93243"/>
    <property type="gene ID" value="VC_0065"/>
</dbReference>
<dbReference type="KEGG" id="vch:VC_0065"/>
<dbReference type="PATRIC" id="fig|243277.26.peg.63"/>
<dbReference type="eggNOG" id="COG2022">
    <property type="taxonomic scope" value="Bacteria"/>
</dbReference>
<dbReference type="HOGENOM" id="CLU_062233_1_0_6"/>
<dbReference type="UniPathway" id="UPA00060"/>
<dbReference type="Proteomes" id="UP000000584">
    <property type="component" value="Chromosome 1"/>
</dbReference>
<dbReference type="GO" id="GO:1902508">
    <property type="term" value="C:2-iminoacetate synthase complex"/>
    <property type="evidence" value="ECO:0000318"/>
    <property type="project" value="GO_Central"/>
</dbReference>
<dbReference type="GO" id="GO:0005737">
    <property type="term" value="C:cytoplasm"/>
    <property type="evidence" value="ECO:0007669"/>
    <property type="project" value="UniProtKB-SubCell"/>
</dbReference>
<dbReference type="GO" id="GO:1990107">
    <property type="term" value="F:thiazole synthase activity"/>
    <property type="evidence" value="ECO:0007669"/>
    <property type="project" value="UniProtKB-EC"/>
</dbReference>
<dbReference type="GO" id="GO:0009228">
    <property type="term" value="P:thiamine biosynthetic process"/>
    <property type="evidence" value="ECO:0000318"/>
    <property type="project" value="GO_Central"/>
</dbReference>
<dbReference type="GO" id="GO:0009229">
    <property type="term" value="P:thiamine diphosphate biosynthetic process"/>
    <property type="evidence" value="ECO:0000318"/>
    <property type="project" value="GO_Central"/>
</dbReference>
<dbReference type="CDD" id="cd04728">
    <property type="entry name" value="ThiG"/>
    <property type="match status" value="1"/>
</dbReference>
<dbReference type="FunFam" id="3.20.20.70:FF:000049">
    <property type="entry name" value="Thiazole synthase"/>
    <property type="match status" value="1"/>
</dbReference>
<dbReference type="Gene3D" id="3.20.20.70">
    <property type="entry name" value="Aldolase class I"/>
    <property type="match status" value="1"/>
</dbReference>
<dbReference type="HAMAP" id="MF_00443">
    <property type="entry name" value="ThiG"/>
    <property type="match status" value="1"/>
</dbReference>
<dbReference type="InterPro" id="IPR013785">
    <property type="entry name" value="Aldolase_TIM"/>
</dbReference>
<dbReference type="InterPro" id="IPR033983">
    <property type="entry name" value="Thiazole_synthase_ThiG"/>
</dbReference>
<dbReference type="InterPro" id="IPR008867">
    <property type="entry name" value="ThiG"/>
</dbReference>
<dbReference type="PANTHER" id="PTHR34266">
    <property type="entry name" value="THIAZOLE SYNTHASE"/>
    <property type="match status" value="1"/>
</dbReference>
<dbReference type="PANTHER" id="PTHR34266:SF2">
    <property type="entry name" value="THIAZOLE SYNTHASE"/>
    <property type="match status" value="1"/>
</dbReference>
<dbReference type="Pfam" id="PF05690">
    <property type="entry name" value="ThiG"/>
    <property type="match status" value="1"/>
</dbReference>
<dbReference type="SUPFAM" id="SSF110399">
    <property type="entry name" value="ThiG-like"/>
    <property type="match status" value="1"/>
</dbReference>
<feature type="chain" id="PRO_0000162870" description="Thiazole synthase">
    <location>
        <begin position="1"/>
        <end position="256"/>
    </location>
</feature>
<feature type="active site" description="Schiff-base intermediate with DXP" evidence="1">
    <location>
        <position position="95"/>
    </location>
</feature>
<feature type="binding site" evidence="1">
    <location>
        <position position="156"/>
    </location>
    <ligand>
        <name>1-deoxy-D-xylulose 5-phosphate</name>
        <dbReference type="ChEBI" id="CHEBI:57792"/>
    </ligand>
</feature>
<feature type="binding site" evidence="1">
    <location>
        <begin position="182"/>
        <end position="183"/>
    </location>
    <ligand>
        <name>1-deoxy-D-xylulose 5-phosphate</name>
        <dbReference type="ChEBI" id="CHEBI:57792"/>
    </ligand>
</feature>
<feature type="binding site" evidence="1">
    <location>
        <begin position="204"/>
        <end position="205"/>
    </location>
    <ligand>
        <name>1-deoxy-D-xylulose 5-phosphate</name>
        <dbReference type="ChEBI" id="CHEBI:57792"/>
    </ligand>
</feature>
<name>THIG_VIBCH</name>
<accession>Q9KVS4</accession>
<keyword id="KW-0963">Cytoplasm</keyword>
<keyword id="KW-1185">Reference proteome</keyword>
<keyword id="KW-0704">Schiff base</keyword>
<keyword id="KW-0784">Thiamine biosynthesis</keyword>
<keyword id="KW-0808">Transferase</keyword>
<organism>
    <name type="scientific">Vibrio cholerae serotype O1 (strain ATCC 39315 / El Tor Inaba N16961)</name>
    <dbReference type="NCBI Taxonomy" id="243277"/>
    <lineage>
        <taxon>Bacteria</taxon>
        <taxon>Pseudomonadati</taxon>
        <taxon>Pseudomonadota</taxon>
        <taxon>Gammaproteobacteria</taxon>
        <taxon>Vibrionales</taxon>
        <taxon>Vibrionaceae</taxon>
        <taxon>Vibrio</taxon>
    </lineage>
</organism>
<reference key="1">
    <citation type="journal article" date="2000" name="Nature">
        <title>DNA sequence of both chromosomes of the cholera pathogen Vibrio cholerae.</title>
        <authorList>
            <person name="Heidelberg J.F."/>
            <person name="Eisen J.A."/>
            <person name="Nelson W.C."/>
            <person name="Clayton R.A."/>
            <person name="Gwinn M.L."/>
            <person name="Dodson R.J."/>
            <person name="Haft D.H."/>
            <person name="Hickey E.K."/>
            <person name="Peterson J.D."/>
            <person name="Umayam L.A."/>
            <person name="Gill S.R."/>
            <person name="Nelson K.E."/>
            <person name="Read T.D."/>
            <person name="Tettelin H."/>
            <person name="Richardson D.L."/>
            <person name="Ermolaeva M.D."/>
            <person name="Vamathevan J.J."/>
            <person name="Bass S."/>
            <person name="Qin H."/>
            <person name="Dragoi I."/>
            <person name="Sellers P."/>
            <person name="McDonald L.A."/>
            <person name="Utterback T.R."/>
            <person name="Fleischmann R.D."/>
            <person name="Nierman W.C."/>
            <person name="White O."/>
            <person name="Salzberg S.L."/>
            <person name="Smith H.O."/>
            <person name="Colwell R.R."/>
            <person name="Mekalanos J.J."/>
            <person name="Venter J.C."/>
            <person name="Fraser C.M."/>
        </authorList>
    </citation>
    <scope>NUCLEOTIDE SEQUENCE [LARGE SCALE GENOMIC DNA]</scope>
    <source>
        <strain>ATCC 39315 / El Tor Inaba N16961</strain>
    </source>
</reference>
<proteinExistence type="inferred from homology"/>
<sequence length="256" mass="27090">MLKIADKTFQSRLFTGTGKFSNRHVMAEALAASGSELVTMALKRIDLAQRDDDILAPLLSMQMNLLPNTSGAKNAADAVYAAELAREALATNWLKLEIHPDPKYLMPDPIETLLAAEQLVKQGFIVLPYCHADPVLCKRLEEVGCAAVMPLGSPIGSNQGLASKTFLEIIIDQAKVPVIVDAGIGSPSDAAQAMELGADAVLVNTAIAAAHDPIAMAKAFKLAVEAGRMAYESGLPSRVKMATASSPLTGFLDFVS</sequence>